<sequence>MVGSVVEAHRQSVGCLRNLSQLLAWASNTSGGLIFYSREDDVLTSTRISYAELLADAGEKARLIGQITGLSSESIILLHFDTQREVIEWFWAATLAGYLPAISTPFVDDTARRKAHLLHLHAQLNQPVVLTSKRLVPEFLGLEELRLHDVESLLSSAAKDGLIQYLGVQKLAEDVAVLMLTSGSTGSAKAVPLRHGQLLTAIQGKSTHHGTLPGDVFYNWVGLDHVASLTEIHLHALILGSDQVHTAASELLRNSLQFVRLLDTHKVAYTFAPNFFLTKVLDSLRENPTFTADLSSLKALISGGESNVVVTCDKLTRELRRRGVQAEVIRPGFGMTETCAGSIYSRACPSYDIRQSLEFASLGSCIPGMHMRIMSITEPGKLAAPGESGELQVAGPVVFDHYYNDETATRNAFTPDGWFITGDLGWIDDAGNLNLAGRTKDTIIVNGVKWSSTELEAAIEEEAVSGLVRSFTVVVPTRPPGSATEEIAVVYSPAYAPEDYHARYETAQVISKTVSLLTGTKPARLIPLPQSLLEKSSLGKISHSKVRAALESGEYASIERADQLILAQYRQFKWRPAKSDSERAVQKALVEFLQVPAEGINMDDSIYDLGVSSLNLILLRSTLQRMLDPKIDIPLSIILNNPTPGAIARSIDSSRSSLAGYNAIVPLQQHRHGGTPLFCIHPGSGEVLVFVALAAHFPTRPVYALRTRGYGSNEQLFGSIEETVETYATQIRQVQPHGPYAIAGYSLGSTLAFEVAKVLEAQGEEVKFLASIDYPPHIAHYVRDLNWTDVLLHIAFFLELIDEKTMVEVTPYLHTLDRQTALTHILNIGDAERARALAIDTKHLGLISDIAENFRVNVKTYKPQGKVQHLDVFVADPPTYAARDRKDWRENKLGRWVDFCETKVEFHDCPGIHAKMLNREHIAGFAKVFKAAMRRRGV</sequence>
<evidence type="ECO:0000250" key="1">
    <source>
        <dbReference type="UniProtKB" id="A7XRY0"/>
    </source>
</evidence>
<evidence type="ECO:0000255" key="2"/>
<evidence type="ECO:0000255" key="3">
    <source>
        <dbReference type="PROSITE-ProRule" id="PRU00258"/>
    </source>
</evidence>
<evidence type="ECO:0000269" key="4">
    <source>
    </source>
</evidence>
<evidence type="ECO:0000303" key="5">
    <source>
    </source>
</evidence>
<evidence type="ECO:0000305" key="6"/>
<accession>Q5B7T4</accession>
<accession>C8VHM5</accession>
<keyword id="KW-0596">Phosphopantetheine</keyword>
<keyword id="KW-0597">Phosphoprotein</keyword>
<keyword id="KW-1185">Reference proteome</keyword>
<keyword id="KW-0808">Transferase</keyword>
<protein>
    <recommendedName>
        <fullName evidence="5">Microperfuranone synthase</fullName>
        <ecNumber evidence="4">2.3.1.-</ecNumber>
    </recommendedName>
    <alternativeName>
        <fullName evidence="6">Nonribosomal peptide synthase micA</fullName>
    </alternativeName>
</protein>
<proteinExistence type="inferred from homology"/>
<comment type="function">
    <text evidence="4">Microperfuranone synthase is the only protein required for the biosynthesis of the secondary metabolite microperfuranone from phenylpyruvic acid (PPA) (PubMed:22627757). Several steps for the microperfuranione biosynthesis have been proposed (PubMed:22627757). These steps include the activation of PPA, by the micA adenylation (A) domain to AMP-phenylpyruvic acid followed by loading of the PPA unit to the thiolation and peptide carrier (T) domain and eventually transferring to the thioesterase (TE) domain (PubMed:22627757). After loading another PPA unit onto the T domain, aldol condensation establishes the carbon-carbon bond between the alpha- and beta-carbon of the two PPA units (PubMed:22627757). Sulfur-assisted furan ring formation, TE domain mediated hydrolysis, decarboxylation, and keto-enol tautomerization would generate microperfuranone attached to the T domain (PubMed:22627757). Finally, microperfuranone is released by the TE domain (PubMed:22627757).</text>
</comment>
<comment type="pathway">
    <text evidence="4">Secondary metabolite biosynthesis.</text>
</comment>
<comment type="similarity">
    <text evidence="6">Belongs to the ATP-dependent AMP-binding enzyme family.</text>
</comment>
<name>MICA_EMENI</name>
<dbReference type="EC" id="2.3.1.-" evidence="4"/>
<dbReference type="EMBL" id="BN001306">
    <property type="protein sequence ID" value="CBF82791.1"/>
    <property type="molecule type" value="Genomic_DNA"/>
</dbReference>
<dbReference type="EMBL" id="AACD01000055">
    <property type="protein sequence ID" value="EAA63364.1"/>
    <property type="molecule type" value="Genomic_DNA"/>
</dbReference>
<dbReference type="RefSeq" id="XP_661000.1">
    <property type="nucleotide sequence ID" value="XM_655908.1"/>
</dbReference>
<dbReference type="SMR" id="Q5B7T4"/>
<dbReference type="STRING" id="227321.Q5B7T4"/>
<dbReference type="ESTHER" id="emeni-q5b7t4">
    <property type="family name" value="Thioesterase"/>
</dbReference>
<dbReference type="EnsemblFungi" id="CBF82791">
    <property type="protein sequence ID" value="CBF82791"/>
    <property type="gene ID" value="ANIA_03396"/>
</dbReference>
<dbReference type="KEGG" id="ani:ANIA_03396"/>
<dbReference type="VEuPathDB" id="FungiDB:AN3396"/>
<dbReference type="eggNOG" id="KOG1176">
    <property type="taxonomic scope" value="Eukaryota"/>
</dbReference>
<dbReference type="eggNOG" id="KOG1202">
    <property type="taxonomic scope" value="Eukaryota"/>
</dbReference>
<dbReference type="HOGENOM" id="CLU_000022_23_6_1"/>
<dbReference type="InParanoid" id="Q5B7T4"/>
<dbReference type="OMA" id="WIDVLLH"/>
<dbReference type="OrthoDB" id="10253869at2759"/>
<dbReference type="Proteomes" id="UP000000560">
    <property type="component" value="Chromosome VI"/>
</dbReference>
<dbReference type="GO" id="GO:0016405">
    <property type="term" value="F:CoA-ligase activity"/>
    <property type="evidence" value="ECO:0000318"/>
    <property type="project" value="GO_Central"/>
</dbReference>
<dbReference type="GO" id="GO:0031177">
    <property type="term" value="F:phosphopantetheine binding"/>
    <property type="evidence" value="ECO:0007669"/>
    <property type="project" value="InterPro"/>
</dbReference>
<dbReference type="GO" id="GO:0016740">
    <property type="term" value="F:transferase activity"/>
    <property type="evidence" value="ECO:0007669"/>
    <property type="project" value="UniProtKB-KW"/>
</dbReference>
<dbReference type="GO" id="GO:1901512">
    <property type="term" value="P:(-)-microperfuranone biosynthetic process"/>
    <property type="evidence" value="ECO:0000315"/>
    <property type="project" value="AspGD"/>
</dbReference>
<dbReference type="GO" id="GO:0006633">
    <property type="term" value="P:fatty acid biosynthetic process"/>
    <property type="evidence" value="ECO:0000318"/>
    <property type="project" value="GO_Central"/>
</dbReference>
<dbReference type="GO" id="GO:0019748">
    <property type="term" value="P:secondary metabolic process"/>
    <property type="evidence" value="ECO:0000303"/>
    <property type="project" value="AspGD"/>
</dbReference>
<dbReference type="CDD" id="cd05906">
    <property type="entry name" value="A_NRPS_TubE_like"/>
    <property type="match status" value="1"/>
</dbReference>
<dbReference type="FunFam" id="3.40.50.1820:FF:000439">
    <property type="entry name" value="Non-ribosomal peptide synthetase OfaC"/>
    <property type="match status" value="1"/>
</dbReference>
<dbReference type="Gene3D" id="3.30.300.30">
    <property type="match status" value="1"/>
</dbReference>
<dbReference type="Gene3D" id="1.10.1200.10">
    <property type="entry name" value="ACP-like"/>
    <property type="match status" value="1"/>
</dbReference>
<dbReference type="Gene3D" id="3.40.50.1820">
    <property type="entry name" value="alpha/beta hydrolase"/>
    <property type="match status" value="1"/>
</dbReference>
<dbReference type="Gene3D" id="3.40.50.12780">
    <property type="entry name" value="N-terminal domain of ligase-like"/>
    <property type="match status" value="1"/>
</dbReference>
<dbReference type="InterPro" id="IPR029058">
    <property type="entry name" value="AB_hydrolase_fold"/>
</dbReference>
<dbReference type="InterPro" id="IPR036736">
    <property type="entry name" value="ACP-like_sf"/>
</dbReference>
<dbReference type="InterPro" id="IPR045851">
    <property type="entry name" value="AMP-bd_C_sf"/>
</dbReference>
<dbReference type="InterPro" id="IPR020845">
    <property type="entry name" value="AMP-binding_CS"/>
</dbReference>
<dbReference type="InterPro" id="IPR000873">
    <property type="entry name" value="AMP-dep_synth/lig_dom"/>
</dbReference>
<dbReference type="InterPro" id="IPR042099">
    <property type="entry name" value="ANL_N_sf"/>
</dbReference>
<dbReference type="InterPro" id="IPR020806">
    <property type="entry name" value="PKS_PP-bd"/>
</dbReference>
<dbReference type="InterPro" id="IPR020802">
    <property type="entry name" value="PKS_thioesterase"/>
</dbReference>
<dbReference type="InterPro" id="IPR009081">
    <property type="entry name" value="PP-bd_ACP"/>
</dbReference>
<dbReference type="InterPro" id="IPR006162">
    <property type="entry name" value="Ppantetheine_attach_site"/>
</dbReference>
<dbReference type="InterPro" id="IPR001031">
    <property type="entry name" value="Thioesterase"/>
</dbReference>
<dbReference type="PANTHER" id="PTHR24096">
    <property type="entry name" value="LONG-CHAIN-FATTY-ACID--COA LIGASE"/>
    <property type="match status" value="1"/>
</dbReference>
<dbReference type="PANTHER" id="PTHR24096:SF267">
    <property type="entry name" value="MALONATE--COA LIGASE ACSF3, MITOCHONDRIAL"/>
    <property type="match status" value="1"/>
</dbReference>
<dbReference type="Pfam" id="PF00501">
    <property type="entry name" value="AMP-binding"/>
    <property type="match status" value="1"/>
</dbReference>
<dbReference type="Pfam" id="PF00550">
    <property type="entry name" value="PP-binding"/>
    <property type="match status" value="1"/>
</dbReference>
<dbReference type="Pfam" id="PF00975">
    <property type="entry name" value="Thioesterase"/>
    <property type="match status" value="1"/>
</dbReference>
<dbReference type="SMART" id="SM00823">
    <property type="entry name" value="PKS_PP"/>
    <property type="match status" value="1"/>
</dbReference>
<dbReference type="SMART" id="SM00824">
    <property type="entry name" value="PKS_TE"/>
    <property type="match status" value="1"/>
</dbReference>
<dbReference type="SUPFAM" id="SSF56801">
    <property type="entry name" value="Acetyl-CoA synthetase-like"/>
    <property type="match status" value="1"/>
</dbReference>
<dbReference type="SUPFAM" id="SSF47336">
    <property type="entry name" value="ACP-like"/>
    <property type="match status" value="1"/>
</dbReference>
<dbReference type="SUPFAM" id="SSF53474">
    <property type="entry name" value="alpha/beta-Hydrolases"/>
    <property type="match status" value="1"/>
</dbReference>
<dbReference type="PROSITE" id="PS00455">
    <property type="entry name" value="AMP_BINDING"/>
    <property type="match status" value="1"/>
</dbReference>
<dbReference type="PROSITE" id="PS50075">
    <property type="entry name" value="CARRIER"/>
    <property type="match status" value="1"/>
</dbReference>
<dbReference type="PROSITE" id="PS00012">
    <property type="entry name" value="PHOSPHOPANTETHEINE"/>
    <property type="match status" value="1"/>
</dbReference>
<feature type="chain" id="PRO_0000437582" description="Microperfuranone synthase">
    <location>
        <begin position="1"/>
        <end position="938"/>
    </location>
</feature>
<feature type="domain" description="Carrier" evidence="3">
    <location>
        <begin position="579"/>
        <end position="655"/>
    </location>
</feature>
<feature type="region of interest" description="Adenylation (A) domain" evidence="2">
    <location>
        <begin position="44"/>
        <end position="445"/>
    </location>
</feature>
<feature type="region of interest" description="Thiolation and peptide carrier (T) domain" evidence="2">
    <location>
        <begin position="581"/>
        <end position="652"/>
    </location>
</feature>
<feature type="region of interest" description="Thioesterase (TE) domain" evidence="2">
    <location>
        <begin position="676"/>
        <end position="923"/>
    </location>
</feature>
<feature type="active site" evidence="1">
    <location>
        <position position="746"/>
    </location>
</feature>
<feature type="modified residue" description="O-(pantetheine 4'-phosphoryl)serine" evidence="3">
    <location>
        <position position="613"/>
    </location>
</feature>
<reference key="1">
    <citation type="journal article" date="2005" name="Nature">
        <title>Sequencing of Aspergillus nidulans and comparative analysis with A. fumigatus and A. oryzae.</title>
        <authorList>
            <person name="Galagan J.E."/>
            <person name="Calvo S.E."/>
            <person name="Cuomo C."/>
            <person name="Ma L.-J."/>
            <person name="Wortman J.R."/>
            <person name="Batzoglou S."/>
            <person name="Lee S.-I."/>
            <person name="Bastuerkmen M."/>
            <person name="Spevak C.C."/>
            <person name="Clutterbuck J."/>
            <person name="Kapitonov V."/>
            <person name="Jurka J."/>
            <person name="Scazzocchio C."/>
            <person name="Farman M.L."/>
            <person name="Butler J."/>
            <person name="Purcell S."/>
            <person name="Harris S."/>
            <person name="Braus G.H."/>
            <person name="Draht O."/>
            <person name="Busch S."/>
            <person name="D'Enfert C."/>
            <person name="Bouchier C."/>
            <person name="Goldman G.H."/>
            <person name="Bell-Pedersen D."/>
            <person name="Griffiths-Jones S."/>
            <person name="Doonan J.H."/>
            <person name="Yu J."/>
            <person name="Vienken K."/>
            <person name="Pain A."/>
            <person name="Freitag M."/>
            <person name="Selker E.U."/>
            <person name="Archer D.B."/>
            <person name="Penalva M.A."/>
            <person name="Oakley B.R."/>
            <person name="Momany M."/>
            <person name="Tanaka T."/>
            <person name="Kumagai T."/>
            <person name="Asai K."/>
            <person name="Machida M."/>
            <person name="Nierman W.C."/>
            <person name="Denning D.W."/>
            <person name="Caddick M.X."/>
            <person name="Hynes M."/>
            <person name="Paoletti M."/>
            <person name="Fischer R."/>
            <person name="Miller B.L."/>
            <person name="Dyer P.S."/>
            <person name="Sachs M.S."/>
            <person name="Osmani S.A."/>
            <person name="Birren B.W."/>
        </authorList>
    </citation>
    <scope>NUCLEOTIDE SEQUENCE [LARGE SCALE GENOMIC DNA]</scope>
    <source>
        <strain>FGSC A4 / ATCC 38163 / CBS 112.46 / NRRL 194 / M139</strain>
    </source>
</reference>
<reference key="2">
    <citation type="journal article" date="2009" name="Fungal Genet. Biol.">
        <title>The 2008 update of the Aspergillus nidulans genome annotation: a community effort.</title>
        <authorList>
            <person name="Wortman J.R."/>
            <person name="Gilsenan J.M."/>
            <person name="Joardar V."/>
            <person name="Deegan J."/>
            <person name="Clutterbuck J."/>
            <person name="Andersen M.R."/>
            <person name="Archer D."/>
            <person name="Bencina M."/>
            <person name="Braus G."/>
            <person name="Coutinho P."/>
            <person name="von Dohren H."/>
            <person name="Doonan J."/>
            <person name="Driessen A.J."/>
            <person name="Durek P."/>
            <person name="Espeso E."/>
            <person name="Fekete E."/>
            <person name="Flipphi M."/>
            <person name="Estrada C.G."/>
            <person name="Geysens S."/>
            <person name="Goldman G."/>
            <person name="de Groot P.W."/>
            <person name="Hansen K."/>
            <person name="Harris S.D."/>
            <person name="Heinekamp T."/>
            <person name="Helmstaedt K."/>
            <person name="Henrissat B."/>
            <person name="Hofmann G."/>
            <person name="Homan T."/>
            <person name="Horio T."/>
            <person name="Horiuchi H."/>
            <person name="James S."/>
            <person name="Jones M."/>
            <person name="Karaffa L."/>
            <person name="Karanyi Z."/>
            <person name="Kato M."/>
            <person name="Keller N."/>
            <person name="Kelly D.E."/>
            <person name="Kiel J.A."/>
            <person name="Kim J.M."/>
            <person name="van der Klei I.J."/>
            <person name="Klis F.M."/>
            <person name="Kovalchuk A."/>
            <person name="Krasevec N."/>
            <person name="Kubicek C.P."/>
            <person name="Liu B."/>
            <person name="Maccabe A."/>
            <person name="Meyer V."/>
            <person name="Mirabito P."/>
            <person name="Miskei M."/>
            <person name="Mos M."/>
            <person name="Mullins J."/>
            <person name="Nelson D.R."/>
            <person name="Nielsen J."/>
            <person name="Oakley B.R."/>
            <person name="Osmani S.A."/>
            <person name="Pakula T."/>
            <person name="Paszewski A."/>
            <person name="Paulsen I."/>
            <person name="Pilsyk S."/>
            <person name="Pocsi I."/>
            <person name="Punt P.J."/>
            <person name="Ram A.F."/>
            <person name="Ren Q."/>
            <person name="Robellet X."/>
            <person name="Robson G."/>
            <person name="Seiboth B."/>
            <person name="van Solingen P."/>
            <person name="Specht T."/>
            <person name="Sun J."/>
            <person name="Taheri-Talesh N."/>
            <person name="Takeshita N."/>
            <person name="Ussery D."/>
            <person name="vanKuyk P.A."/>
            <person name="Visser H."/>
            <person name="van de Vondervoort P.J."/>
            <person name="de Vries R.P."/>
            <person name="Walton J."/>
            <person name="Xiang X."/>
            <person name="Xiong Y."/>
            <person name="Zeng A.P."/>
            <person name="Brandt B.W."/>
            <person name="Cornell M.J."/>
            <person name="van den Hondel C.A."/>
            <person name="Visser J."/>
            <person name="Oliver S.G."/>
            <person name="Turner G."/>
        </authorList>
    </citation>
    <scope>GENOME REANNOTATION</scope>
    <source>
        <strain>FGSC A4 / ATCC 38163 / CBS 112.46 / NRRL 194 / M139</strain>
    </source>
</reference>
<reference key="3">
    <citation type="journal article" date="2012" name="Appl. Microbiol. Biotechnol.">
        <title>Molecular genetic analysis reveals that a nonribosomal peptide synthetase-like (NRPS-like) gene in Aspergillus nidulans is responsible for microperfuranone biosynthesis.</title>
        <authorList>
            <person name="Yeh H.H."/>
            <person name="Chiang Y.M."/>
            <person name="Entwistle R."/>
            <person name="Ahuja M."/>
            <person name="Lee K.H."/>
            <person name="Bruno K.S."/>
            <person name="Wu T.K."/>
            <person name="Oakley B.R."/>
            <person name="Wang C.C."/>
        </authorList>
    </citation>
    <scope>FUNCTION</scope>
</reference>
<gene>
    <name evidence="5" type="primary">micA</name>
    <name type="ORF">AN3396</name>
</gene>
<organism>
    <name type="scientific">Emericella nidulans (strain FGSC A4 / ATCC 38163 / CBS 112.46 / NRRL 194 / M139)</name>
    <name type="common">Aspergillus nidulans</name>
    <dbReference type="NCBI Taxonomy" id="227321"/>
    <lineage>
        <taxon>Eukaryota</taxon>
        <taxon>Fungi</taxon>
        <taxon>Dikarya</taxon>
        <taxon>Ascomycota</taxon>
        <taxon>Pezizomycotina</taxon>
        <taxon>Eurotiomycetes</taxon>
        <taxon>Eurotiomycetidae</taxon>
        <taxon>Eurotiales</taxon>
        <taxon>Aspergillaceae</taxon>
        <taxon>Aspergillus</taxon>
        <taxon>Aspergillus subgen. Nidulantes</taxon>
    </lineage>
</organism>